<comment type="function">
    <text evidence="1">Allows the formation of correctly charged Asn-tRNA(Asn) or Gln-tRNA(Gln) through the transamidation of misacylated Asp-tRNA(Asn) or Glu-tRNA(Gln) in organisms which lack either or both of asparaginyl-tRNA or glutaminyl-tRNA synthetases. The reaction takes place in the presence of glutamine and ATP through an activated phospho-Asp-tRNA(Asn) or phospho-Glu-tRNA(Gln).</text>
</comment>
<comment type="catalytic activity">
    <reaction evidence="1">
        <text>L-glutamyl-tRNA(Gln) + L-glutamine + ATP + H2O = L-glutaminyl-tRNA(Gln) + L-glutamate + ADP + phosphate + H(+)</text>
        <dbReference type="Rhea" id="RHEA:17521"/>
        <dbReference type="Rhea" id="RHEA-COMP:9681"/>
        <dbReference type="Rhea" id="RHEA-COMP:9684"/>
        <dbReference type="ChEBI" id="CHEBI:15377"/>
        <dbReference type="ChEBI" id="CHEBI:15378"/>
        <dbReference type="ChEBI" id="CHEBI:29985"/>
        <dbReference type="ChEBI" id="CHEBI:30616"/>
        <dbReference type="ChEBI" id="CHEBI:43474"/>
        <dbReference type="ChEBI" id="CHEBI:58359"/>
        <dbReference type="ChEBI" id="CHEBI:78520"/>
        <dbReference type="ChEBI" id="CHEBI:78521"/>
        <dbReference type="ChEBI" id="CHEBI:456216"/>
    </reaction>
</comment>
<comment type="catalytic activity">
    <reaction evidence="1">
        <text>L-aspartyl-tRNA(Asn) + L-glutamine + ATP + H2O = L-asparaginyl-tRNA(Asn) + L-glutamate + ADP + phosphate + 2 H(+)</text>
        <dbReference type="Rhea" id="RHEA:14513"/>
        <dbReference type="Rhea" id="RHEA-COMP:9674"/>
        <dbReference type="Rhea" id="RHEA-COMP:9677"/>
        <dbReference type="ChEBI" id="CHEBI:15377"/>
        <dbReference type="ChEBI" id="CHEBI:15378"/>
        <dbReference type="ChEBI" id="CHEBI:29985"/>
        <dbReference type="ChEBI" id="CHEBI:30616"/>
        <dbReference type="ChEBI" id="CHEBI:43474"/>
        <dbReference type="ChEBI" id="CHEBI:58359"/>
        <dbReference type="ChEBI" id="CHEBI:78515"/>
        <dbReference type="ChEBI" id="CHEBI:78516"/>
        <dbReference type="ChEBI" id="CHEBI:456216"/>
    </reaction>
</comment>
<comment type="subunit">
    <text evidence="1">Heterotrimer of A, B and C subunits.</text>
</comment>
<comment type="similarity">
    <text evidence="1">Belongs to the GatC family.</text>
</comment>
<gene>
    <name evidence="1" type="primary">gatC</name>
    <name type="ordered locus">Tgr7_0515</name>
</gene>
<dbReference type="EC" id="6.3.5.-" evidence="1"/>
<dbReference type="EMBL" id="CP001339">
    <property type="protein sequence ID" value="ACL71612.1"/>
    <property type="molecule type" value="Genomic_DNA"/>
</dbReference>
<dbReference type="RefSeq" id="WP_012637100.1">
    <property type="nucleotide sequence ID" value="NC_011901.1"/>
</dbReference>
<dbReference type="SMR" id="B8GL94"/>
<dbReference type="STRING" id="396588.Tgr7_0515"/>
<dbReference type="KEGG" id="tgr:Tgr7_0515"/>
<dbReference type="eggNOG" id="COG0721">
    <property type="taxonomic scope" value="Bacteria"/>
</dbReference>
<dbReference type="HOGENOM" id="CLU_105899_2_2_6"/>
<dbReference type="OrthoDB" id="9794326at2"/>
<dbReference type="Proteomes" id="UP000002383">
    <property type="component" value="Chromosome"/>
</dbReference>
<dbReference type="GO" id="GO:0050566">
    <property type="term" value="F:asparaginyl-tRNA synthase (glutamine-hydrolyzing) activity"/>
    <property type="evidence" value="ECO:0007669"/>
    <property type="project" value="RHEA"/>
</dbReference>
<dbReference type="GO" id="GO:0005524">
    <property type="term" value="F:ATP binding"/>
    <property type="evidence" value="ECO:0007669"/>
    <property type="project" value="UniProtKB-KW"/>
</dbReference>
<dbReference type="GO" id="GO:0050567">
    <property type="term" value="F:glutaminyl-tRNA synthase (glutamine-hydrolyzing) activity"/>
    <property type="evidence" value="ECO:0007669"/>
    <property type="project" value="UniProtKB-UniRule"/>
</dbReference>
<dbReference type="GO" id="GO:0070681">
    <property type="term" value="P:glutaminyl-tRNAGln biosynthesis via transamidation"/>
    <property type="evidence" value="ECO:0007669"/>
    <property type="project" value="TreeGrafter"/>
</dbReference>
<dbReference type="GO" id="GO:0006450">
    <property type="term" value="P:regulation of translational fidelity"/>
    <property type="evidence" value="ECO:0007669"/>
    <property type="project" value="InterPro"/>
</dbReference>
<dbReference type="GO" id="GO:0006412">
    <property type="term" value="P:translation"/>
    <property type="evidence" value="ECO:0007669"/>
    <property type="project" value="UniProtKB-UniRule"/>
</dbReference>
<dbReference type="Gene3D" id="1.10.20.60">
    <property type="entry name" value="Glu-tRNAGln amidotransferase C subunit, N-terminal domain"/>
    <property type="match status" value="1"/>
</dbReference>
<dbReference type="HAMAP" id="MF_00122">
    <property type="entry name" value="GatC"/>
    <property type="match status" value="1"/>
</dbReference>
<dbReference type="InterPro" id="IPR036113">
    <property type="entry name" value="Asp/Glu-ADT_sf_sub_c"/>
</dbReference>
<dbReference type="InterPro" id="IPR003837">
    <property type="entry name" value="GatC"/>
</dbReference>
<dbReference type="NCBIfam" id="TIGR00135">
    <property type="entry name" value="gatC"/>
    <property type="match status" value="1"/>
</dbReference>
<dbReference type="PANTHER" id="PTHR15004">
    <property type="entry name" value="GLUTAMYL-TRNA(GLN) AMIDOTRANSFERASE SUBUNIT C, MITOCHONDRIAL"/>
    <property type="match status" value="1"/>
</dbReference>
<dbReference type="PANTHER" id="PTHR15004:SF0">
    <property type="entry name" value="GLUTAMYL-TRNA(GLN) AMIDOTRANSFERASE SUBUNIT C, MITOCHONDRIAL"/>
    <property type="match status" value="1"/>
</dbReference>
<dbReference type="Pfam" id="PF02686">
    <property type="entry name" value="GatC"/>
    <property type="match status" value="1"/>
</dbReference>
<dbReference type="SUPFAM" id="SSF141000">
    <property type="entry name" value="Glu-tRNAGln amidotransferase C subunit"/>
    <property type="match status" value="1"/>
</dbReference>
<proteinExistence type="inferred from homology"/>
<sequence>MSLSHDDVRKIAHLARLAVSDADVEAYARSLSSILDFVEQMEAVKTDHVAPMAHPQDTAQRLRDDAVSEADQRERFQSIAPAVEAGLYLVPKVIE</sequence>
<name>GATC_THISH</name>
<protein>
    <recommendedName>
        <fullName evidence="1">Aspartyl/glutamyl-tRNA(Asn/Gln) amidotransferase subunit C</fullName>
        <shortName evidence="1">Asp/Glu-ADT subunit C</shortName>
        <ecNumber evidence="1">6.3.5.-</ecNumber>
    </recommendedName>
</protein>
<accession>B8GL94</accession>
<keyword id="KW-0067">ATP-binding</keyword>
<keyword id="KW-0436">Ligase</keyword>
<keyword id="KW-0547">Nucleotide-binding</keyword>
<keyword id="KW-0648">Protein biosynthesis</keyword>
<keyword id="KW-1185">Reference proteome</keyword>
<feature type="chain" id="PRO_1000122591" description="Aspartyl/glutamyl-tRNA(Asn/Gln) amidotransferase subunit C">
    <location>
        <begin position="1"/>
        <end position="95"/>
    </location>
</feature>
<organism>
    <name type="scientific">Thioalkalivibrio sulfidiphilus (strain HL-EbGR7)</name>
    <dbReference type="NCBI Taxonomy" id="396588"/>
    <lineage>
        <taxon>Bacteria</taxon>
        <taxon>Pseudomonadati</taxon>
        <taxon>Pseudomonadota</taxon>
        <taxon>Gammaproteobacteria</taxon>
        <taxon>Chromatiales</taxon>
        <taxon>Ectothiorhodospiraceae</taxon>
        <taxon>Thioalkalivibrio</taxon>
    </lineage>
</organism>
<reference key="1">
    <citation type="journal article" date="2011" name="Stand. Genomic Sci.">
        <title>Complete genome sequence of 'Thioalkalivibrio sulfidophilus' HL-EbGr7.</title>
        <authorList>
            <person name="Muyzer G."/>
            <person name="Sorokin D.Y."/>
            <person name="Mavromatis K."/>
            <person name="Lapidus A."/>
            <person name="Clum A."/>
            <person name="Ivanova N."/>
            <person name="Pati A."/>
            <person name="d'Haeseleer P."/>
            <person name="Woyke T."/>
            <person name="Kyrpides N.C."/>
        </authorList>
    </citation>
    <scope>NUCLEOTIDE SEQUENCE [LARGE SCALE GENOMIC DNA]</scope>
    <source>
        <strain>HL-EbGR7</strain>
    </source>
</reference>
<evidence type="ECO:0000255" key="1">
    <source>
        <dbReference type="HAMAP-Rule" id="MF_00122"/>
    </source>
</evidence>